<proteinExistence type="evidence at protein level"/>
<sequence>MNGVYDVGGTDGLGPINRPADEPVFRAEWEKVAFAMFPATFRAGFMGLDEFRFGIEQMNPAEYLESPYYWHWIRTYIHHGVRTGKIDLEELERRTQYYRENPDAPLPEHEQKPELIEFVNQAVYGGLPASREVDRPPKFKEGDVVRFSTASPKGHARRARYVRGKTGTVVKHHGAYIYPDTAGNGLGECPEHLYTVRFTAQELWGPEGDPNSSVYYDCWEPYIELVDTKAAAA</sequence>
<name>NHAB_PSETH</name>
<reference evidence="3" key="1">
    <citation type="journal article" date="1997" name="J. Ferment. Bioeng.">
        <title>Cloning and sequencing of a nitrile hydratase gene from Pseudonocardia thermophila JCM3095.</title>
        <authorList>
            <person name="Yamaki T."/>
            <person name="Oikawa T."/>
            <person name="Ito K."/>
            <person name="Nakamura T."/>
        </authorList>
    </citation>
    <scope>NUCLEOTIDE SEQUENCE [GENOMIC DNA]</scope>
    <scope>PROTEIN SEQUENCE OF 1-7</scope>
    <scope>CATALYTIC ACTIVITY</scope>
    <source>
        <strain>ATCC 19285 / DSM 43832 / JCM 3095 / CBS 277.66 / NBRC 15559 / NCIMB 10079 / NRRL B-1978</strain>
    </source>
</reference>
<reference evidence="4" key="2">
    <citation type="journal article" date="2001" name="Biochem. Biophys. Res. Commun.">
        <title>Crystal structure of cobalt-containing nitrile hydratase.</title>
        <authorList>
            <person name="Miyanaga A."/>
            <person name="Fushinobu S."/>
            <person name="Ito K."/>
            <person name="Wakagi T."/>
        </authorList>
    </citation>
    <scope>X-RAY CRYSTALLOGRAPHY (1.8 ANGSTROMS) OF 1-229</scope>
    <source>
        <strain>ATCC 19285 / DSM 43832 / JCM 3095 / CBS 277.66 / NBRC 15559 / NCIMB 10079 / NRRL B-1978</strain>
    </source>
</reference>
<accession>Q7SID3</accession>
<keyword id="KW-0002">3D-structure</keyword>
<keyword id="KW-0903">Direct protein sequencing</keyword>
<keyword id="KW-0456">Lyase</keyword>
<dbReference type="EC" id="4.2.1.84"/>
<dbReference type="RefSeq" id="WP_073455623.1">
    <property type="nucleotide sequence ID" value="NZ_CALGVN010000033.1"/>
</dbReference>
<dbReference type="PDB" id="1IRE">
    <property type="method" value="X-ray"/>
    <property type="resolution" value="1.80 A"/>
    <property type="chains" value="B=1-228"/>
</dbReference>
<dbReference type="PDB" id="1UGP">
    <property type="method" value="X-ray"/>
    <property type="resolution" value="1.63 A"/>
    <property type="chains" value="B=1-226"/>
</dbReference>
<dbReference type="PDB" id="1UGQ">
    <property type="method" value="X-ray"/>
    <property type="resolution" value="2.00 A"/>
    <property type="chains" value="B=1-228"/>
</dbReference>
<dbReference type="PDB" id="1UGR">
    <property type="method" value="X-ray"/>
    <property type="resolution" value="1.80 A"/>
    <property type="chains" value="B=1-228"/>
</dbReference>
<dbReference type="PDB" id="1UGS">
    <property type="method" value="X-ray"/>
    <property type="resolution" value="2.00 A"/>
    <property type="chains" value="B=1-228"/>
</dbReference>
<dbReference type="PDB" id="3VYH">
    <property type="method" value="X-ray"/>
    <property type="resolution" value="1.63 A"/>
    <property type="chains" value="B=1-233"/>
</dbReference>
<dbReference type="PDB" id="4OB0">
    <property type="method" value="X-ray"/>
    <property type="resolution" value="1.20 A"/>
    <property type="chains" value="B=1-233"/>
</dbReference>
<dbReference type="PDB" id="4OB1">
    <property type="method" value="X-ray"/>
    <property type="resolution" value="1.63 A"/>
    <property type="chains" value="B=1-233"/>
</dbReference>
<dbReference type="PDB" id="4OB2">
    <property type="method" value="X-ray"/>
    <property type="resolution" value="1.52 A"/>
    <property type="chains" value="B=1-233"/>
</dbReference>
<dbReference type="PDB" id="4OB3">
    <property type="method" value="X-ray"/>
    <property type="resolution" value="1.92 A"/>
    <property type="chains" value="B=1-233"/>
</dbReference>
<dbReference type="PDB" id="7SJZ">
    <property type="method" value="X-ray"/>
    <property type="resolution" value="1.85 A"/>
    <property type="chains" value="B=1-233"/>
</dbReference>
<dbReference type="PDB" id="7W8L">
    <property type="method" value="X-ray"/>
    <property type="resolution" value="2.30 A"/>
    <property type="chains" value="B=1-233"/>
</dbReference>
<dbReference type="PDB" id="7W8M">
    <property type="method" value="X-ray"/>
    <property type="resolution" value="2.60 A"/>
    <property type="chains" value="B=1-233"/>
</dbReference>
<dbReference type="PDB" id="8I6N">
    <property type="method" value="X-ray"/>
    <property type="resolution" value="2.20 A"/>
    <property type="chains" value="B=1-233"/>
</dbReference>
<dbReference type="PDB" id="9D5U">
    <property type="method" value="X-ray"/>
    <property type="resolution" value="1.35 A"/>
    <property type="chains" value="B=1-228"/>
</dbReference>
<dbReference type="PDB" id="9D5V">
    <property type="method" value="X-ray"/>
    <property type="resolution" value="1.26 A"/>
    <property type="chains" value="B=1-228"/>
</dbReference>
<dbReference type="PDB" id="9D5Y">
    <property type="method" value="X-ray"/>
    <property type="resolution" value="1.35 A"/>
    <property type="chains" value="B=1-228"/>
</dbReference>
<dbReference type="PDB" id="9D65">
    <property type="method" value="X-ray"/>
    <property type="resolution" value="1.45 A"/>
    <property type="chains" value="B=1-228"/>
</dbReference>
<dbReference type="PDB" id="9D6J">
    <property type="method" value="X-ray"/>
    <property type="resolution" value="1.47 A"/>
    <property type="chains" value="B=1-228"/>
</dbReference>
<dbReference type="PDB" id="9D6K">
    <property type="method" value="X-ray"/>
    <property type="resolution" value="1.29 A"/>
    <property type="chains" value="B=1-228"/>
</dbReference>
<dbReference type="PDB" id="9D6M">
    <property type="method" value="X-ray"/>
    <property type="resolution" value="1.56 A"/>
    <property type="chains" value="B=1-228"/>
</dbReference>
<dbReference type="PDBsum" id="1IRE"/>
<dbReference type="PDBsum" id="1UGP"/>
<dbReference type="PDBsum" id="1UGQ"/>
<dbReference type="PDBsum" id="1UGR"/>
<dbReference type="PDBsum" id="1UGS"/>
<dbReference type="PDBsum" id="3VYH"/>
<dbReference type="PDBsum" id="4OB0"/>
<dbReference type="PDBsum" id="4OB1"/>
<dbReference type="PDBsum" id="4OB2"/>
<dbReference type="PDBsum" id="4OB3"/>
<dbReference type="PDBsum" id="7SJZ"/>
<dbReference type="PDBsum" id="7W8L"/>
<dbReference type="PDBsum" id="7W8M"/>
<dbReference type="PDBsum" id="8I6N"/>
<dbReference type="PDBsum" id="9D5U"/>
<dbReference type="PDBsum" id="9D5V"/>
<dbReference type="PDBsum" id="9D5Y"/>
<dbReference type="PDBsum" id="9D65"/>
<dbReference type="PDBsum" id="9D6J"/>
<dbReference type="PDBsum" id="9D6K"/>
<dbReference type="PDBsum" id="9D6M"/>
<dbReference type="SMR" id="Q7SID3"/>
<dbReference type="IntAct" id="Q7SID3">
    <property type="interactions" value="1"/>
</dbReference>
<dbReference type="STRING" id="1848.SAMN05443637_10360"/>
<dbReference type="OrthoDB" id="3478924at2"/>
<dbReference type="BRENDA" id="4.2.1.84">
    <property type="organism ID" value="5208"/>
</dbReference>
<dbReference type="EvolutionaryTrace" id="Q7SID3"/>
<dbReference type="GO" id="GO:0018822">
    <property type="term" value="F:nitrile hydratase activity"/>
    <property type="evidence" value="ECO:0000314"/>
    <property type="project" value="UniProtKB"/>
</dbReference>
<dbReference type="GO" id="GO:0046914">
    <property type="term" value="F:transition metal ion binding"/>
    <property type="evidence" value="ECO:0007669"/>
    <property type="project" value="InterPro"/>
</dbReference>
<dbReference type="GO" id="GO:0050899">
    <property type="term" value="P:nitrile catabolic process"/>
    <property type="evidence" value="ECO:0000314"/>
    <property type="project" value="UniProtKB"/>
</dbReference>
<dbReference type="Gene3D" id="2.30.30.50">
    <property type="match status" value="1"/>
</dbReference>
<dbReference type="Gene3D" id="1.10.472.20">
    <property type="entry name" value="Nitrile hydratase, beta subunit"/>
    <property type="match status" value="1"/>
</dbReference>
<dbReference type="InterPro" id="IPR049054">
    <property type="entry name" value="CN_hydtase_beta-like_N"/>
</dbReference>
<dbReference type="InterPro" id="IPR042262">
    <property type="entry name" value="CN_hydtase_beta_C"/>
</dbReference>
<dbReference type="InterPro" id="IPR024690">
    <property type="entry name" value="CN_hydtase_beta_dom_C"/>
</dbReference>
<dbReference type="InterPro" id="IPR008990">
    <property type="entry name" value="Elect_transpt_acc-like_dom_sf"/>
</dbReference>
<dbReference type="InterPro" id="IPR003168">
    <property type="entry name" value="Nitrile_hydratase_bsu"/>
</dbReference>
<dbReference type="NCBIfam" id="TIGR03888">
    <property type="entry name" value="nitrile_beta"/>
    <property type="match status" value="1"/>
</dbReference>
<dbReference type="Pfam" id="PF02211">
    <property type="entry name" value="NHase_beta_C"/>
    <property type="match status" value="1"/>
</dbReference>
<dbReference type="Pfam" id="PF21006">
    <property type="entry name" value="NHase_beta_N"/>
    <property type="match status" value="1"/>
</dbReference>
<dbReference type="PIRSF" id="PIRSF001427">
    <property type="entry name" value="NHase_beta"/>
    <property type="match status" value="1"/>
</dbReference>
<dbReference type="SUPFAM" id="SSF50090">
    <property type="entry name" value="Electron transport accessory proteins"/>
    <property type="match status" value="1"/>
</dbReference>
<organism evidence="4">
    <name type="scientific">Pseudonocardia thermophila</name>
    <dbReference type="NCBI Taxonomy" id="1848"/>
    <lineage>
        <taxon>Bacteria</taxon>
        <taxon>Bacillati</taxon>
        <taxon>Actinomycetota</taxon>
        <taxon>Actinomycetes</taxon>
        <taxon>Pseudonocardiales</taxon>
        <taxon>Pseudonocardiaceae</taxon>
        <taxon>Pseudonocardia</taxon>
    </lineage>
</organism>
<protein>
    <recommendedName>
        <fullName>Cobalt-containing nitrile hydratase subunit beta</fullName>
        <shortName>L-NHase</shortName>
        <shortName>L-nitrilase</shortName>
        <ecNumber>4.2.1.84</ecNumber>
    </recommendedName>
</protein>
<evidence type="ECO:0000269" key="1">
    <source>
    </source>
</evidence>
<evidence type="ECO:0000269" key="2">
    <source ref="1"/>
</evidence>
<evidence type="ECO:0000305" key="3"/>
<evidence type="ECO:0000312" key="4">
    <source>
        <dbReference type="PDB" id="1IRE"/>
    </source>
</evidence>
<evidence type="ECO:0007829" key="5">
    <source>
        <dbReference type="PDB" id="4OB0"/>
    </source>
</evidence>
<evidence type="ECO:0007829" key="6">
    <source>
        <dbReference type="PDB" id="9D5V"/>
    </source>
</evidence>
<comment type="function">
    <text evidence="3">NHase catalyzes the hydration of various nitrile compounds to the corresponding amides.</text>
</comment>
<comment type="catalytic activity">
    <reaction evidence="2 3">
        <text>an aliphatic primary amide = an aliphatic nitrile + H2O</text>
        <dbReference type="Rhea" id="RHEA:12673"/>
        <dbReference type="ChEBI" id="CHEBI:15377"/>
        <dbReference type="ChEBI" id="CHEBI:65285"/>
        <dbReference type="ChEBI" id="CHEBI:80291"/>
        <dbReference type="EC" id="4.2.1.84"/>
    </reaction>
</comment>
<comment type="biophysicochemical properties">
    <temperatureDependence>
        <text>Optimum temperature is 60 degrees Celsius.</text>
    </temperatureDependence>
</comment>
<comment type="subunit">
    <text evidence="1">Heterotetramer of two alpha and two beta chains.</text>
</comment>
<comment type="interaction">
    <interactant intactId="EBI-1032285">
        <id>Q7SID3</id>
    </interactant>
    <interactant intactId="EBI-1032292">
        <id>Q7SID2</id>
    </interactant>
    <organismsDiffer>false</organismsDiffer>
    <experiments>5</experiments>
</comment>
<comment type="biotechnology">
    <text evidence="3">Industrial production of acrylamide is now being developed using some of these enzymes.</text>
</comment>
<comment type="similarity">
    <text evidence="3">Belongs to the nitrile hydratase subunit beta family.</text>
</comment>
<feature type="chain" id="PRO_0000186830" description="Cobalt-containing nitrile hydratase subunit beta">
    <location>
        <begin position="1"/>
        <end position="233"/>
    </location>
</feature>
<feature type="helix" evidence="5">
    <location>
        <begin position="28"/>
        <end position="42"/>
    </location>
</feature>
<feature type="helix" evidence="5">
    <location>
        <begin position="48"/>
        <end position="56"/>
    </location>
</feature>
<feature type="helix" evidence="5">
    <location>
        <begin position="60"/>
        <end position="65"/>
    </location>
</feature>
<feature type="helix" evidence="5">
    <location>
        <begin position="68"/>
        <end position="82"/>
    </location>
</feature>
<feature type="helix" evidence="5">
    <location>
        <begin position="88"/>
        <end position="100"/>
    </location>
</feature>
<feature type="helix" evidence="5">
    <location>
        <begin position="113"/>
        <end position="125"/>
    </location>
</feature>
<feature type="strand" evidence="5">
    <location>
        <begin position="144"/>
        <end position="147"/>
    </location>
</feature>
<feature type="helix" evidence="5">
    <location>
        <begin position="160"/>
        <end position="162"/>
    </location>
</feature>
<feature type="strand" evidence="5">
    <location>
        <begin position="166"/>
        <end position="176"/>
    </location>
</feature>
<feature type="helix" evidence="5">
    <location>
        <begin position="179"/>
        <end position="182"/>
    </location>
</feature>
<feature type="turn" evidence="5">
    <location>
        <begin position="183"/>
        <end position="185"/>
    </location>
</feature>
<feature type="strand" evidence="5">
    <location>
        <begin position="191"/>
        <end position="199"/>
    </location>
</feature>
<feature type="helix" evidence="5">
    <location>
        <begin position="200"/>
        <end position="204"/>
    </location>
</feature>
<feature type="helix" evidence="6">
    <location>
        <begin position="205"/>
        <end position="207"/>
    </location>
</feature>
<feature type="strand" evidence="5">
    <location>
        <begin position="212"/>
        <end position="219"/>
    </location>
</feature>
<feature type="helix" evidence="5">
    <location>
        <begin position="220"/>
        <end position="222"/>
    </location>
</feature>
<feature type="strand" evidence="5">
    <location>
        <begin position="223"/>
        <end position="227"/>
    </location>
</feature>